<evidence type="ECO:0000255" key="1">
    <source>
        <dbReference type="HAMAP-Rule" id="MF_00921"/>
    </source>
</evidence>
<evidence type="ECO:0000305" key="2"/>
<feature type="chain" id="PRO_0000196621" description="Putative pyruvate, phosphate dikinase regulatory protein">
    <location>
        <begin position="1"/>
        <end position="279"/>
    </location>
</feature>
<feature type="binding site" evidence="1">
    <location>
        <begin position="152"/>
        <end position="159"/>
    </location>
    <ligand>
        <name>ADP</name>
        <dbReference type="ChEBI" id="CHEBI:456216"/>
    </ligand>
</feature>
<dbReference type="EC" id="2.7.11.32" evidence="1"/>
<dbReference type="EC" id="2.7.4.27" evidence="1"/>
<dbReference type="EMBL" id="CP000030">
    <property type="protein sequence ID" value="AAV86404.1"/>
    <property type="status" value="ALT_INIT"/>
    <property type="molecule type" value="Genomic_DNA"/>
</dbReference>
<dbReference type="RefSeq" id="WP_012880916.1">
    <property type="nucleotide sequence ID" value="NZ_AFMU01000046.1"/>
</dbReference>
<dbReference type="SMR" id="Q5PBC5"/>
<dbReference type="KEGG" id="ama:AM316"/>
<dbReference type="HOGENOM" id="CLU_046206_2_0_5"/>
<dbReference type="GO" id="GO:0043531">
    <property type="term" value="F:ADP binding"/>
    <property type="evidence" value="ECO:0007669"/>
    <property type="project" value="UniProtKB-UniRule"/>
</dbReference>
<dbReference type="GO" id="GO:0005524">
    <property type="term" value="F:ATP binding"/>
    <property type="evidence" value="ECO:0007669"/>
    <property type="project" value="InterPro"/>
</dbReference>
<dbReference type="GO" id="GO:0016776">
    <property type="term" value="F:phosphotransferase activity, phosphate group as acceptor"/>
    <property type="evidence" value="ECO:0007669"/>
    <property type="project" value="UniProtKB-UniRule"/>
</dbReference>
<dbReference type="GO" id="GO:0004674">
    <property type="term" value="F:protein serine/threonine kinase activity"/>
    <property type="evidence" value="ECO:0007669"/>
    <property type="project" value="UniProtKB-UniRule"/>
</dbReference>
<dbReference type="HAMAP" id="MF_00921">
    <property type="entry name" value="PDRP"/>
    <property type="match status" value="1"/>
</dbReference>
<dbReference type="InterPro" id="IPR005177">
    <property type="entry name" value="Kinase-pyrophosphorylase"/>
</dbReference>
<dbReference type="InterPro" id="IPR026565">
    <property type="entry name" value="PPDK_reg"/>
</dbReference>
<dbReference type="NCBIfam" id="NF003742">
    <property type="entry name" value="PRK05339.1"/>
    <property type="match status" value="1"/>
</dbReference>
<dbReference type="PANTHER" id="PTHR31756">
    <property type="entry name" value="PYRUVATE, PHOSPHATE DIKINASE REGULATORY PROTEIN 1, CHLOROPLASTIC"/>
    <property type="match status" value="1"/>
</dbReference>
<dbReference type="PANTHER" id="PTHR31756:SF3">
    <property type="entry name" value="PYRUVATE, PHOSPHATE DIKINASE REGULATORY PROTEIN 1, CHLOROPLASTIC"/>
    <property type="match status" value="1"/>
</dbReference>
<dbReference type="Pfam" id="PF03618">
    <property type="entry name" value="Kinase-PPPase"/>
    <property type="match status" value="1"/>
</dbReference>
<sequence>MRNKAVLDLHLVSDSTCETVIAVARSAVEHFKSLEVNEFVWSLVGSKRQVDKVMLNINPERHNLIMYTVVDDDLRKYLKEKATAQSVRCIPVLAHVIREISCYLQVTKDPNAHPHKLGDEYFNRIDAINYTISHDDGQNLWDIDQADIIIVGVSRTSKSPTSIYLAYRGYRVVNIPLVCSVQLPVDPATIADKLVVGLTIDADRLIQIRRNRLISMKHQENCNYVSYEQVVEEISEMKKICAKNRWPTIDVTQKSVEEIAATIIQFFNRKNNRTGDALY</sequence>
<gene>
    <name type="ordered locus">AM316</name>
</gene>
<proteinExistence type="inferred from homology"/>
<organism>
    <name type="scientific">Anaplasma marginale (strain St. Maries)</name>
    <dbReference type="NCBI Taxonomy" id="234826"/>
    <lineage>
        <taxon>Bacteria</taxon>
        <taxon>Pseudomonadati</taxon>
        <taxon>Pseudomonadota</taxon>
        <taxon>Alphaproteobacteria</taxon>
        <taxon>Rickettsiales</taxon>
        <taxon>Anaplasmataceae</taxon>
        <taxon>Anaplasma</taxon>
    </lineage>
</organism>
<protein>
    <recommendedName>
        <fullName evidence="1">Putative pyruvate, phosphate dikinase regulatory protein</fullName>
        <shortName evidence="1">PPDK regulatory protein</shortName>
        <ecNumber evidence="1">2.7.11.32</ecNumber>
        <ecNumber evidence="1">2.7.4.27</ecNumber>
    </recommendedName>
</protein>
<comment type="function">
    <text evidence="1">Bifunctional serine/threonine kinase and phosphorylase involved in the regulation of the pyruvate, phosphate dikinase (PPDK) by catalyzing its phosphorylation/dephosphorylation.</text>
</comment>
<comment type="catalytic activity">
    <reaction evidence="1">
        <text>N(tele)-phospho-L-histidyl/L-threonyl-[pyruvate, phosphate dikinase] + ADP = N(tele)-phospho-L-histidyl/O-phospho-L-threonyl-[pyruvate, phosphate dikinase] + AMP + H(+)</text>
        <dbReference type="Rhea" id="RHEA:43692"/>
        <dbReference type="Rhea" id="RHEA-COMP:10650"/>
        <dbReference type="Rhea" id="RHEA-COMP:10651"/>
        <dbReference type="ChEBI" id="CHEBI:15378"/>
        <dbReference type="ChEBI" id="CHEBI:30013"/>
        <dbReference type="ChEBI" id="CHEBI:61977"/>
        <dbReference type="ChEBI" id="CHEBI:83586"/>
        <dbReference type="ChEBI" id="CHEBI:456215"/>
        <dbReference type="ChEBI" id="CHEBI:456216"/>
        <dbReference type="EC" id="2.7.11.32"/>
    </reaction>
</comment>
<comment type="catalytic activity">
    <reaction evidence="1">
        <text>N(tele)-phospho-L-histidyl/O-phospho-L-threonyl-[pyruvate, phosphate dikinase] + phosphate + H(+) = N(tele)-phospho-L-histidyl/L-threonyl-[pyruvate, phosphate dikinase] + diphosphate</text>
        <dbReference type="Rhea" id="RHEA:43696"/>
        <dbReference type="Rhea" id="RHEA-COMP:10650"/>
        <dbReference type="Rhea" id="RHEA-COMP:10651"/>
        <dbReference type="ChEBI" id="CHEBI:15378"/>
        <dbReference type="ChEBI" id="CHEBI:30013"/>
        <dbReference type="ChEBI" id="CHEBI:33019"/>
        <dbReference type="ChEBI" id="CHEBI:43474"/>
        <dbReference type="ChEBI" id="CHEBI:61977"/>
        <dbReference type="ChEBI" id="CHEBI:83586"/>
        <dbReference type="EC" id="2.7.4.27"/>
    </reaction>
</comment>
<comment type="similarity">
    <text evidence="1">Belongs to the pyruvate, phosphate/water dikinase regulatory protein family. PDRP subfamily.</text>
</comment>
<comment type="sequence caution" evidence="2">
    <conflict type="erroneous initiation">
        <sequence resource="EMBL-CDS" id="AAV86404"/>
    </conflict>
</comment>
<name>PDRP_ANAMM</name>
<accession>Q5PBC5</accession>
<keyword id="KW-0418">Kinase</keyword>
<keyword id="KW-0547">Nucleotide-binding</keyword>
<keyword id="KW-0723">Serine/threonine-protein kinase</keyword>
<keyword id="KW-0808">Transferase</keyword>
<reference key="1">
    <citation type="journal article" date="2005" name="Proc. Natl. Acad. Sci. U.S.A.">
        <title>Complete genome sequencing of Anaplasma marginale reveals that the surface is skewed to two superfamilies of outer membrane proteins.</title>
        <authorList>
            <person name="Brayton K.A."/>
            <person name="Kappmeyer L.S."/>
            <person name="Herndon D.R."/>
            <person name="Dark M.J."/>
            <person name="Tibbals D.L."/>
            <person name="Palmer G.H."/>
            <person name="McGuire T.C."/>
            <person name="Knowles D.P. Jr."/>
        </authorList>
    </citation>
    <scope>NUCLEOTIDE SEQUENCE [LARGE SCALE GENOMIC DNA]</scope>
    <source>
        <strain>St. Maries</strain>
    </source>
</reference>